<evidence type="ECO:0000250" key="1"/>
<evidence type="ECO:0000255" key="2"/>
<evidence type="ECO:0000255" key="3">
    <source>
        <dbReference type="PROSITE-ProRule" id="PRU00280"/>
    </source>
</evidence>
<evidence type="ECO:0000256" key="4">
    <source>
        <dbReference type="SAM" id="MobiDB-lite"/>
    </source>
</evidence>
<evidence type="ECO:0000269" key="5">
    <source>
    </source>
</evidence>
<evidence type="ECO:0000269" key="6">
    <source>
    </source>
</evidence>
<evidence type="ECO:0000269" key="7">
    <source>
    </source>
</evidence>
<evidence type="ECO:0000269" key="8">
    <source ref="8"/>
</evidence>
<evidence type="ECO:0000303" key="9">
    <source>
    </source>
</evidence>
<evidence type="ECO:0000305" key="10"/>
<evidence type="ECO:0007829" key="11">
    <source>
        <dbReference type="PDB" id="5LBD"/>
    </source>
</evidence>
<keyword id="KW-0002">3D-structure</keyword>
<keyword id="KW-0025">Alternative splicing</keyword>
<keyword id="KW-0067">ATP-binding</keyword>
<keyword id="KW-0150">Chloroplast</keyword>
<keyword id="KW-0186">Copper</keyword>
<keyword id="KW-0187">Copper transport</keyword>
<keyword id="KW-0406">Ion transport</keyword>
<keyword id="KW-0460">Magnesium</keyword>
<keyword id="KW-0472">Membrane</keyword>
<keyword id="KW-0479">Metal-binding</keyword>
<keyword id="KW-0547">Nucleotide-binding</keyword>
<keyword id="KW-0934">Plastid</keyword>
<keyword id="KW-1185">Reference proteome</keyword>
<keyword id="KW-0809">Transit peptide</keyword>
<keyword id="KW-1278">Translocase</keyword>
<keyword id="KW-0812">Transmembrane</keyword>
<keyword id="KW-1133">Transmembrane helix</keyword>
<keyword id="KW-0813">Transport</keyword>
<proteinExistence type="evidence at protein level"/>
<gene>
    <name type="primary">PAA1</name>
    <name type="synonym">GIR1</name>
    <name type="synonym">HMA6</name>
    <name type="ordered locus">At4g33520</name>
    <name type="ORF">F17M5.280</name>
    <name type="ORF">T16L1.10</name>
</gene>
<sequence>MESTLSAFSTVKATAMARSSGGPSLPLLTISKALNRHFTGARHLHPLLLARCSPSVRRLGGFHGSRFTSSNSALRSLGAAVLPVIRHRLECLSSSSPSFRSISSGGGSGFGGYNGGSGGGGGGGSESGDSKSKLGANASDGVSVPSSDIIILDVGGMTCGGCSASVKKILESQPQVASASVNLTTETAIVWPVPEAKSVPDWQKSLGETLANHLTNCGFQSTPRDLVTENFFKVFETKTKDKQARLKESGRELAVSWALCAVCLVGHLTHFLGVNAPWIHAIHSTGFHVSLCLITLLGPGRKLVLDGIKSLLKGSPNMNTLVGLGALSSFSVSSLAAMIPKLGWKTFFEEPVMLIAFVLLGRNLEQRAKIKATSDMTGLLSVLPSKARLLLDGDLQNSTVEVPCNSLSVGDLVVILPGDRVPADGVVKSGRSTIDESSFTGEPLPVTKESGSQVAAGSINLNGTLTVEVHRSGGETAVGDIIRLVEEAQSREAPVQQLVDKVAGRFTYGVMALSAATFTFWNLFGAHVLPSALHNGSPMSLALQLSCSVLVVACPCALGLATPTAMLVGTSLGARRGLLLRGGDILEKFSLVDTVVFDKTGTLTKGHPVVTEVIIPENPRHNLNDTWSEVEVLMLAAAVESNTTHPVGKAIVKAARARNCQTMKAEDGTFTEEPGSGAVAIVNNKRVTVGTLEWVKRHGATGNSLLALEEHEINNQSVVYIGVDNTLAAVIRFEDKVREDAAQVVENLTRQGIDVYMLSGDKRNAANYVASVVGINHERVIAGVKPAEKKNFINELQKNKKIVAMVGDGINDAAALASSNVGVAMGGGAGAASEVSPVVLMGNRLTQLLDAMELSRQTMKTVKQNLWWAFGYNIVGIPIAAGVLLPLTGTMLTPSMAGALMGVSSLGVMTNSLLLRYRFFSNRNDKNVKPEPKEGTKQPHENTRWKQSS</sequence>
<reference key="1">
    <citation type="journal article" date="1997" name="Biochim. Biophys. Acta">
        <title>Cloning of a cDNA encoding a putative metal-transporting P-type ATPase from Arabidopsis thaliana.</title>
        <authorList>
            <person name="Tabata K."/>
            <person name="Kashiwagi S."/>
            <person name="Mori H."/>
            <person name="Ueguchi C."/>
            <person name="Mizuno T."/>
        </authorList>
    </citation>
    <scope>NUCLEOTIDE SEQUENCE [MRNA] (ISOFORM 1)</scope>
    <source>
        <strain>cv. Landsberg erecta</strain>
    </source>
</reference>
<reference key="2">
    <citation type="journal article" date="1999" name="Nature">
        <title>Sequence and analysis of chromosome 4 of the plant Arabidopsis thaliana.</title>
        <authorList>
            <person name="Mayer K.F.X."/>
            <person name="Schueller C."/>
            <person name="Wambutt R."/>
            <person name="Murphy G."/>
            <person name="Volckaert G."/>
            <person name="Pohl T."/>
            <person name="Duesterhoeft A."/>
            <person name="Stiekema W."/>
            <person name="Entian K.-D."/>
            <person name="Terryn N."/>
            <person name="Harris B."/>
            <person name="Ansorge W."/>
            <person name="Brandt P."/>
            <person name="Grivell L.A."/>
            <person name="Rieger M."/>
            <person name="Weichselgartner M."/>
            <person name="de Simone V."/>
            <person name="Obermaier B."/>
            <person name="Mache R."/>
            <person name="Mueller M."/>
            <person name="Kreis M."/>
            <person name="Delseny M."/>
            <person name="Puigdomenech P."/>
            <person name="Watson M."/>
            <person name="Schmidtheini T."/>
            <person name="Reichert B."/>
            <person name="Portetelle D."/>
            <person name="Perez-Alonso M."/>
            <person name="Boutry M."/>
            <person name="Bancroft I."/>
            <person name="Vos P."/>
            <person name="Hoheisel J."/>
            <person name="Zimmermann W."/>
            <person name="Wedler H."/>
            <person name="Ridley P."/>
            <person name="Langham S.-A."/>
            <person name="McCullagh B."/>
            <person name="Bilham L."/>
            <person name="Robben J."/>
            <person name="van der Schueren J."/>
            <person name="Grymonprez B."/>
            <person name="Chuang Y.-J."/>
            <person name="Vandenbussche F."/>
            <person name="Braeken M."/>
            <person name="Weltjens I."/>
            <person name="Voet M."/>
            <person name="Bastiaens I."/>
            <person name="Aert R."/>
            <person name="Defoor E."/>
            <person name="Weitzenegger T."/>
            <person name="Bothe G."/>
            <person name="Ramsperger U."/>
            <person name="Hilbert H."/>
            <person name="Braun M."/>
            <person name="Holzer E."/>
            <person name="Brandt A."/>
            <person name="Peters S."/>
            <person name="van Staveren M."/>
            <person name="Dirkse W."/>
            <person name="Mooijman P."/>
            <person name="Klein Lankhorst R."/>
            <person name="Rose M."/>
            <person name="Hauf J."/>
            <person name="Koetter P."/>
            <person name="Berneiser S."/>
            <person name="Hempel S."/>
            <person name="Feldpausch M."/>
            <person name="Lamberth S."/>
            <person name="Van den Daele H."/>
            <person name="De Keyser A."/>
            <person name="Buysshaert C."/>
            <person name="Gielen J."/>
            <person name="Villarroel R."/>
            <person name="De Clercq R."/>
            <person name="van Montagu M."/>
            <person name="Rogers J."/>
            <person name="Cronin A."/>
            <person name="Quail M.A."/>
            <person name="Bray-Allen S."/>
            <person name="Clark L."/>
            <person name="Doggett J."/>
            <person name="Hall S."/>
            <person name="Kay M."/>
            <person name="Lennard N."/>
            <person name="McLay K."/>
            <person name="Mayes R."/>
            <person name="Pettett A."/>
            <person name="Rajandream M.A."/>
            <person name="Lyne M."/>
            <person name="Benes V."/>
            <person name="Rechmann S."/>
            <person name="Borkova D."/>
            <person name="Bloecker H."/>
            <person name="Scharfe M."/>
            <person name="Grimm M."/>
            <person name="Loehnert T.-H."/>
            <person name="Dose S."/>
            <person name="de Haan M."/>
            <person name="Maarse A.C."/>
            <person name="Schaefer M."/>
            <person name="Mueller-Auer S."/>
            <person name="Gabel C."/>
            <person name="Fuchs M."/>
            <person name="Fartmann B."/>
            <person name="Granderath K."/>
            <person name="Dauner D."/>
            <person name="Herzl A."/>
            <person name="Neumann S."/>
            <person name="Argiriou A."/>
            <person name="Vitale D."/>
            <person name="Liguori R."/>
            <person name="Piravandi E."/>
            <person name="Massenet O."/>
            <person name="Quigley F."/>
            <person name="Clabauld G."/>
            <person name="Muendlein A."/>
            <person name="Felber R."/>
            <person name="Schnabl S."/>
            <person name="Hiller R."/>
            <person name="Schmidt W."/>
            <person name="Lecharny A."/>
            <person name="Aubourg S."/>
            <person name="Chefdor F."/>
            <person name="Cooke R."/>
            <person name="Berger C."/>
            <person name="Monfort A."/>
            <person name="Casacuberta E."/>
            <person name="Gibbons T."/>
            <person name="Weber N."/>
            <person name="Vandenbol M."/>
            <person name="Bargues M."/>
            <person name="Terol J."/>
            <person name="Torres A."/>
            <person name="Perez-Perez A."/>
            <person name="Purnelle B."/>
            <person name="Bent E."/>
            <person name="Johnson S."/>
            <person name="Tacon D."/>
            <person name="Jesse T."/>
            <person name="Heijnen L."/>
            <person name="Schwarz S."/>
            <person name="Scholler P."/>
            <person name="Heber S."/>
            <person name="Francs P."/>
            <person name="Bielke C."/>
            <person name="Frishman D."/>
            <person name="Haase D."/>
            <person name="Lemcke K."/>
            <person name="Mewes H.-W."/>
            <person name="Stocker S."/>
            <person name="Zaccaria P."/>
            <person name="Bevan M."/>
            <person name="Wilson R.K."/>
            <person name="de la Bastide M."/>
            <person name="Habermann K."/>
            <person name="Parnell L."/>
            <person name="Dedhia N."/>
            <person name="Gnoj L."/>
            <person name="Schutz K."/>
            <person name="Huang E."/>
            <person name="Spiegel L."/>
            <person name="Sekhon M."/>
            <person name="Murray J."/>
            <person name="Sheet P."/>
            <person name="Cordes M."/>
            <person name="Abu-Threideh J."/>
            <person name="Stoneking T."/>
            <person name="Kalicki J."/>
            <person name="Graves T."/>
            <person name="Harmon G."/>
            <person name="Edwards J."/>
            <person name="Latreille P."/>
            <person name="Courtney L."/>
            <person name="Cloud J."/>
            <person name="Abbott A."/>
            <person name="Scott K."/>
            <person name="Johnson D."/>
            <person name="Minx P."/>
            <person name="Bentley D."/>
            <person name="Fulton B."/>
            <person name="Miller N."/>
            <person name="Greco T."/>
            <person name="Kemp K."/>
            <person name="Kramer J."/>
            <person name="Fulton L."/>
            <person name="Mardis E."/>
            <person name="Dante M."/>
            <person name="Pepin K."/>
            <person name="Hillier L.W."/>
            <person name="Nelson J."/>
            <person name="Spieth J."/>
            <person name="Ryan E."/>
            <person name="Andrews S."/>
            <person name="Geisel C."/>
            <person name="Layman D."/>
            <person name="Du H."/>
            <person name="Ali J."/>
            <person name="Berghoff A."/>
            <person name="Jones K."/>
            <person name="Drone K."/>
            <person name="Cotton M."/>
            <person name="Joshu C."/>
            <person name="Antonoiu B."/>
            <person name="Zidanic M."/>
            <person name="Strong C."/>
            <person name="Sun H."/>
            <person name="Lamar B."/>
            <person name="Yordan C."/>
            <person name="Ma P."/>
            <person name="Zhong J."/>
            <person name="Preston R."/>
            <person name="Vil D."/>
            <person name="Shekher M."/>
            <person name="Matero A."/>
            <person name="Shah R."/>
            <person name="Swaby I.K."/>
            <person name="O'Shaughnessy A."/>
            <person name="Rodriguez M."/>
            <person name="Hoffman J."/>
            <person name="Till S."/>
            <person name="Granat S."/>
            <person name="Shohdy N."/>
            <person name="Hasegawa A."/>
            <person name="Hameed A."/>
            <person name="Lodhi M."/>
            <person name="Johnson A."/>
            <person name="Chen E."/>
            <person name="Marra M.A."/>
            <person name="Martienssen R."/>
            <person name="McCombie W.R."/>
        </authorList>
    </citation>
    <scope>NUCLEOTIDE SEQUENCE [LARGE SCALE GENOMIC DNA]</scope>
    <source>
        <strain>cv. Columbia</strain>
    </source>
</reference>
<reference key="3">
    <citation type="journal article" date="2017" name="Plant J.">
        <title>Araport11: a complete reannotation of the Arabidopsis thaliana reference genome.</title>
        <authorList>
            <person name="Cheng C.Y."/>
            <person name="Krishnakumar V."/>
            <person name="Chan A.P."/>
            <person name="Thibaud-Nissen F."/>
            <person name="Schobel S."/>
            <person name="Town C.D."/>
        </authorList>
    </citation>
    <scope>GENOME REANNOTATION</scope>
    <source>
        <strain>cv. Columbia</strain>
    </source>
</reference>
<reference key="4">
    <citation type="journal article" date="2003" name="Science">
        <title>Empirical analysis of transcriptional activity in the Arabidopsis genome.</title>
        <authorList>
            <person name="Yamada K."/>
            <person name="Lim J."/>
            <person name="Dale J.M."/>
            <person name="Chen H."/>
            <person name="Shinn P."/>
            <person name="Palm C.J."/>
            <person name="Southwick A.M."/>
            <person name="Wu H.C."/>
            <person name="Kim C.J."/>
            <person name="Nguyen M."/>
            <person name="Pham P.K."/>
            <person name="Cheuk R.F."/>
            <person name="Karlin-Newmann G."/>
            <person name="Liu S.X."/>
            <person name="Lam B."/>
            <person name="Sakano H."/>
            <person name="Wu T."/>
            <person name="Yu G."/>
            <person name="Miranda M."/>
            <person name="Quach H.L."/>
            <person name="Tripp M."/>
            <person name="Chang C.H."/>
            <person name="Lee J.M."/>
            <person name="Toriumi M.J."/>
            <person name="Chan M.M."/>
            <person name="Tang C.C."/>
            <person name="Onodera C.S."/>
            <person name="Deng J.M."/>
            <person name="Akiyama K."/>
            <person name="Ansari Y."/>
            <person name="Arakawa T."/>
            <person name="Banh J."/>
            <person name="Banno F."/>
            <person name="Bowser L."/>
            <person name="Brooks S.Y."/>
            <person name="Carninci P."/>
            <person name="Chao Q."/>
            <person name="Choy N."/>
            <person name="Enju A."/>
            <person name="Goldsmith A.D."/>
            <person name="Gurjal M."/>
            <person name="Hansen N.F."/>
            <person name="Hayashizaki Y."/>
            <person name="Johnson-Hopson C."/>
            <person name="Hsuan V.W."/>
            <person name="Iida K."/>
            <person name="Karnes M."/>
            <person name="Khan S."/>
            <person name="Koesema E."/>
            <person name="Ishida J."/>
            <person name="Jiang P.X."/>
            <person name="Jones T."/>
            <person name="Kawai J."/>
            <person name="Kamiya A."/>
            <person name="Meyers C."/>
            <person name="Nakajima M."/>
            <person name="Narusaka M."/>
            <person name="Seki M."/>
            <person name="Sakurai T."/>
            <person name="Satou M."/>
            <person name="Tamse R."/>
            <person name="Vaysberg M."/>
            <person name="Wallender E.K."/>
            <person name="Wong C."/>
            <person name="Yamamura Y."/>
            <person name="Yuan S."/>
            <person name="Shinozaki K."/>
            <person name="Davis R.W."/>
            <person name="Theologis A."/>
            <person name="Ecker J.R."/>
        </authorList>
    </citation>
    <scope>NUCLEOTIDE SEQUENCE [LARGE SCALE MRNA] (ISOFORM 2)</scope>
    <source>
        <strain>cv. Columbia</strain>
    </source>
</reference>
<reference key="5">
    <citation type="submission" date="2006-07" db="EMBL/GenBank/DDBJ databases">
        <title>Large-scale analysis of RIKEN Arabidopsis full-length (RAFL) cDNAs.</title>
        <authorList>
            <person name="Totoki Y."/>
            <person name="Seki M."/>
            <person name="Ishida J."/>
            <person name="Nakajima M."/>
            <person name="Enju A."/>
            <person name="Kamiya A."/>
            <person name="Narusaka M."/>
            <person name="Shin-i T."/>
            <person name="Nakagawa M."/>
            <person name="Sakamoto N."/>
            <person name="Oishi K."/>
            <person name="Kohara Y."/>
            <person name="Kobayashi M."/>
            <person name="Toyoda A."/>
            <person name="Sakaki Y."/>
            <person name="Sakurai T."/>
            <person name="Iida K."/>
            <person name="Akiyama K."/>
            <person name="Satou M."/>
            <person name="Toyoda T."/>
            <person name="Konagaya A."/>
            <person name="Carninci P."/>
            <person name="Kawai J."/>
            <person name="Hayashizaki Y."/>
            <person name="Shinozaki K."/>
        </authorList>
    </citation>
    <scope>NUCLEOTIDE SEQUENCE [LARGE SCALE MRNA] (ISOFORM 1)</scope>
    <source>
        <strain>cv. Columbia</strain>
    </source>
</reference>
<reference key="6">
    <citation type="journal article" date="2003" name="Plant Cell">
        <title>PAA1, a P-type ATPase of Arabidopsis, functions in copper transport in chloroplasts.</title>
        <authorList>
            <person name="Shikanai T."/>
            <person name="Muller-Moule P."/>
            <person name="Munekage Y."/>
            <person name="Niyogi K.K."/>
            <person name="Pilon M."/>
        </authorList>
    </citation>
    <scope>FUNCTION</scope>
    <scope>DISRUPTION PHENOTYPE</scope>
    <scope>SUBCELLULAR LOCATION</scope>
</reference>
<reference key="7">
    <citation type="journal article" date="2005" name="Plant Cell">
        <title>Two P-type ATPases are required for copper delivery in Arabidopsis thaliana chloroplasts.</title>
        <authorList>
            <person name="Abdel-Ghany S.E."/>
            <person name="Muller-Moule P."/>
            <person name="Niyogi K.K."/>
            <person name="Pilon M."/>
            <person name="Shikanai T."/>
        </authorList>
    </citation>
    <scope>FUNCTION</scope>
    <scope>SUBCELLULAR LOCATION</scope>
    <scope>TISSUE SPECIFICITY</scope>
</reference>
<reference key="8">
    <citation type="book" date="2010" name="Proceedings of the 21st international conference on Arabidopsis research">
        <title>Analysis of gir1 (glucose insensitive root 1) reveals that a role of the chloroplastic copper transporter paa1 in sugar signaling.</title>
        <authorList>
            <person name="Lee S.A."/>
            <person name="Chang K.S."/>
            <person name="Hwang I."/>
            <person name="Cheong H."/>
            <person name="Lim J."/>
        </authorList>
    </citation>
    <scope>FUNCTION</scope>
    <scope>DISRUPTION PHENOTYPE</scope>
</reference>
<reference key="9">
    <citation type="journal article" date="2011" name="J. Biol. Chem.">
        <title>Biochemical characterization of AtHMA6/PAA1, a chloroplast envelope Cu(I)-ATPase.</title>
        <authorList>
            <person name="Catty P."/>
            <person name="Boutigny S."/>
            <person name="Miras R."/>
            <person name="Joyard J."/>
            <person name="Rolland N."/>
            <person name="Seigneurin-Berny D."/>
        </authorList>
    </citation>
    <scope>FUNCTION</scope>
</reference>
<comment type="function">
    <text evidence="5 6 7 8">Mediates copper transfer across the plastid envelope. Required for the delivery of copper into the plastid stroma, which is essential for the function of copper proteins. Seems to be selective for monovalent copper Cu(+) transport. Also plays a role in glucose signaling-mediated cell proliferation of root meristem in non-green tissues.</text>
</comment>
<comment type="catalytic activity">
    <reaction>
        <text>Cu(+)(in) + ATP + H2O = Cu(+)(out) + ADP + phosphate + H(+)</text>
        <dbReference type="Rhea" id="RHEA:25792"/>
        <dbReference type="ChEBI" id="CHEBI:15377"/>
        <dbReference type="ChEBI" id="CHEBI:15378"/>
        <dbReference type="ChEBI" id="CHEBI:30616"/>
        <dbReference type="ChEBI" id="CHEBI:43474"/>
        <dbReference type="ChEBI" id="CHEBI:49552"/>
        <dbReference type="ChEBI" id="CHEBI:456216"/>
        <dbReference type="EC" id="7.2.2.8"/>
    </reaction>
</comment>
<comment type="interaction">
    <interactant intactId="EBI-4441998">
        <id>Q9SZC9</id>
    </interactant>
    <interactant intactId="EBI-15681313">
        <id>Q9LF53</id>
        <label>RGL3</label>
    </interactant>
    <organismsDiffer>false</organismsDiffer>
    <experiments>3</experiments>
</comment>
<comment type="subcellular location">
    <subcellularLocation>
        <location evidence="5 6">Plastid</location>
        <location evidence="5 6">Chloroplast membrane</location>
        <topology evidence="5 6">Multi-pass membrane protein</topology>
    </subcellularLocation>
</comment>
<comment type="alternative products">
    <event type="alternative splicing"/>
    <isoform>
        <id>Q9SZC9-1</id>
        <name>1</name>
        <sequence type="displayed"/>
    </isoform>
    <isoform>
        <id>Q9SZC9-2</id>
        <name>2</name>
        <sequence type="described" ref="VSP_040517 VSP_040518"/>
    </isoform>
</comment>
<comment type="tissue specificity">
    <text evidence="6">Expressed in the shoots and roots.</text>
</comment>
<comment type="disruption phenotype">
    <text evidence="5 8">High-chlorophyll-fluorescence phenotype. Short roots.</text>
</comment>
<comment type="similarity">
    <text evidence="10">Belongs to the cation transport ATPase (P-type) (TC 3.A.3) family. Type IB subfamily.</text>
</comment>
<accession>Q9SZC9</accession>
<accession>O48600</accession>
<accession>O81870</accession>
<accession>Q0WPL5</accession>
<accession>Q93YP5</accession>
<protein>
    <recommendedName>
        <fullName>Copper-transporting ATPase PAA1, chloroplastic</fullName>
        <ecNumber>7.2.2.8</ecNumber>
    </recommendedName>
    <alternativeName>
        <fullName>Protein HEAVY METAL ATPASE 6</fullName>
    </alternativeName>
    <alternativeName>
        <fullName>Protein glucose insensitive root 1</fullName>
    </alternativeName>
</protein>
<dbReference type="EC" id="7.2.2.8"/>
<dbReference type="EMBL" id="D89981">
    <property type="protein sequence ID" value="BAA23769.1"/>
    <property type="molecule type" value="mRNA"/>
</dbReference>
<dbReference type="EMBL" id="AL031394">
    <property type="protein sequence ID" value="CAA20565.1"/>
    <property type="molecule type" value="Genomic_DNA"/>
</dbReference>
<dbReference type="EMBL" id="AL035678">
    <property type="protein sequence ID" value="CAB38810.1"/>
    <property type="molecule type" value="Genomic_DNA"/>
</dbReference>
<dbReference type="EMBL" id="AL161583">
    <property type="protein sequence ID" value="CAB80069.1"/>
    <property type="molecule type" value="Genomic_DNA"/>
</dbReference>
<dbReference type="EMBL" id="CP002687">
    <property type="protein sequence ID" value="AEE86239.1"/>
    <property type="molecule type" value="Genomic_DNA"/>
</dbReference>
<dbReference type="EMBL" id="CP002687">
    <property type="protein sequence ID" value="AEE86240.1"/>
    <property type="molecule type" value="Genomic_DNA"/>
</dbReference>
<dbReference type="EMBL" id="AY059869">
    <property type="protein sequence ID" value="AAL24351.1"/>
    <property type="molecule type" value="mRNA"/>
</dbReference>
<dbReference type="EMBL" id="AY093320">
    <property type="protein sequence ID" value="AAM13319.1"/>
    <property type="molecule type" value="mRNA"/>
</dbReference>
<dbReference type="EMBL" id="AK229051">
    <property type="protein sequence ID" value="BAF00934.1"/>
    <property type="molecule type" value="mRNA"/>
</dbReference>
<dbReference type="PIR" id="T06003">
    <property type="entry name" value="T06003"/>
</dbReference>
<dbReference type="RefSeq" id="NP_567924.1">
    <molecule id="Q9SZC9-2"/>
    <property type="nucleotide sequence ID" value="NM_119506.4"/>
</dbReference>
<dbReference type="RefSeq" id="NP_974675.1">
    <molecule id="Q9SZC9-1"/>
    <property type="nucleotide sequence ID" value="NM_202946.3"/>
</dbReference>
<dbReference type="PDB" id="5LBD">
    <property type="method" value="X-ray"/>
    <property type="resolution" value="1.50 A"/>
    <property type="chains" value="A/B=607-734"/>
</dbReference>
<dbReference type="PDBsum" id="5LBD"/>
<dbReference type="SMR" id="Q9SZC9"/>
<dbReference type="BioGRID" id="14774">
    <property type="interactions" value="5"/>
</dbReference>
<dbReference type="FunCoup" id="Q9SZC9">
    <property type="interactions" value="612"/>
</dbReference>
<dbReference type="IntAct" id="Q9SZC9">
    <property type="interactions" value="3"/>
</dbReference>
<dbReference type="STRING" id="3702.Q9SZC9"/>
<dbReference type="TCDB" id="3.A.3.5.11">
    <property type="family name" value="the p-type atpase (p-atpase) superfamily"/>
</dbReference>
<dbReference type="GlyGen" id="Q9SZC9">
    <property type="glycosylation" value="1 site"/>
</dbReference>
<dbReference type="iPTMnet" id="Q9SZC9"/>
<dbReference type="PaxDb" id="3702-AT4G33520.2"/>
<dbReference type="ProteomicsDB" id="230255">
    <molecule id="Q9SZC9-1"/>
</dbReference>
<dbReference type="EnsemblPlants" id="AT4G33520.1">
    <molecule id="Q9SZC9-2"/>
    <property type="protein sequence ID" value="AT4G33520.1"/>
    <property type="gene ID" value="AT4G33520"/>
</dbReference>
<dbReference type="EnsemblPlants" id="AT4G33520.2">
    <molecule id="Q9SZC9-1"/>
    <property type="protein sequence ID" value="AT4G33520.2"/>
    <property type="gene ID" value="AT4G33520"/>
</dbReference>
<dbReference type="GeneID" id="829490"/>
<dbReference type="Gramene" id="AT4G33520.1">
    <molecule id="Q9SZC9-2"/>
    <property type="protein sequence ID" value="AT4G33520.1"/>
    <property type="gene ID" value="AT4G33520"/>
</dbReference>
<dbReference type="Gramene" id="AT4G33520.2">
    <molecule id="Q9SZC9-1"/>
    <property type="protein sequence ID" value="AT4G33520.2"/>
    <property type="gene ID" value="AT4G33520"/>
</dbReference>
<dbReference type="KEGG" id="ath:AT4G33520"/>
<dbReference type="Araport" id="AT4G33520"/>
<dbReference type="TAIR" id="AT4G33520">
    <property type="gene designation" value="PAA1"/>
</dbReference>
<dbReference type="eggNOG" id="KOG0207">
    <property type="taxonomic scope" value="Eukaryota"/>
</dbReference>
<dbReference type="HOGENOM" id="CLU_001771_0_3_1"/>
<dbReference type="InParanoid" id="Q9SZC9"/>
<dbReference type="OMA" id="NAPLMHL"/>
<dbReference type="PhylomeDB" id="Q9SZC9"/>
<dbReference type="BioCyc" id="ARA:AT4G33520-MONOMER"/>
<dbReference type="BioCyc" id="MetaCyc:MONOMER-14495"/>
<dbReference type="BRENDA" id="7.2.2.9">
    <property type="organism ID" value="399"/>
</dbReference>
<dbReference type="PRO" id="PR:Q9SZC9"/>
<dbReference type="Proteomes" id="UP000006548">
    <property type="component" value="Chromosome 4"/>
</dbReference>
<dbReference type="ExpressionAtlas" id="Q9SZC9">
    <property type="expression patterns" value="baseline and differential"/>
</dbReference>
<dbReference type="GO" id="GO:0009507">
    <property type="term" value="C:chloroplast"/>
    <property type="evidence" value="ECO:0007005"/>
    <property type="project" value="TAIR"/>
</dbReference>
<dbReference type="GO" id="GO:0009941">
    <property type="term" value="C:chloroplast envelope"/>
    <property type="evidence" value="ECO:0000314"/>
    <property type="project" value="TAIR"/>
</dbReference>
<dbReference type="GO" id="GO:0031969">
    <property type="term" value="C:chloroplast membrane"/>
    <property type="evidence" value="ECO:0007669"/>
    <property type="project" value="UniProtKB-SubCell"/>
</dbReference>
<dbReference type="GO" id="GO:0009570">
    <property type="term" value="C:chloroplast stroma"/>
    <property type="evidence" value="ECO:0007005"/>
    <property type="project" value="TAIR"/>
</dbReference>
<dbReference type="GO" id="GO:0005886">
    <property type="term" value="C:plasma membrane"/>
    <property type="evidence" value="ECO:0007005"/>
    <property type="project" value="TAIR"/>
</dbReference>
<dbReference type="GO" id="GO:0009536">
    <property type="term" value="C:plastid"/>
    <property type="evidence" value="ECO:0007005"/>
    <property type="project" value="TAIR"/>
</dbReference>
<dbReference type="GO" id="GO:0005524">
    <property type="term" value="F:ATP binding"/>
    <property type="evidence" value="ECO:0007669"/>
    <property type="project" value="UniProtKB-KW"/>
</dbReference>
<dbReference type="GO" id="GO:0016887">
    <property type="term" value="F:ATP hydrolysis activity"/>
    <property type="evidence" value="ECO:0007669"/>
    <property type="project" value="InterPro"/>
</dbReference>
<dbReference type="GO" id="GO:0016531">
    <property type="term" value="F:copper chaperone activity"/>
    <property type="evidence" value="ECO:0000314"/>
    <property type="project" value="TAIR"/>
</dbReference>
<dbReference type="GO" id="GO:0005375">
    <property type="term" value="F:copper ion transmembrane transporter activity"/>
    <property type="evidence" value="ECO:0000315"/>
    <property type="project" value="TAIR"/>
</dbReference>
<dbReference type="GO" id="GO:0046872">
    <property type="term" value="F:metal ion binding"/>
    <property type="evidence" value="ECO:0007669"/>
    <property type="project" value="UniProtKB-KW"/>
</dbReference>
<dbReference type="GO" id="GO:0140581">
    <property type="term" value="F:P-type monovalent copper transporter activity"/>
    <property type="evidence" value="ECO:0007669"/>
    <property type="project" value="UniProtKB-EC"/>
</dbReference>
<dbReference type="GO" id="GO:0055070">
    <property type="term" value="P:copper ion homeostasis"/>
    <property type="evidence" value="ECO:0000314"/>
    <property type="project" value="TAIR"/>
</dbReference>
<dbReference type="GO" id="GO:0035434">
    <property type="term" value="P:copper ion transmembrane transport"/>
    <property type="evidence" value="ECO:0000315"/>
    <property type="project" value="UniProtKB"/>
</dbReference>
<dbReference type="GO" id="GO:0009767">
    <property type="term" value="P:photosynthetic electron transport chain"/>
    <property type="evidence" value="ECO:0000315"/>
    <property type="project" value="UniProtKB"/>
</dbReference>
<dbReference type="CDD" id="cd00371">
    <property type="entry name" value="HMA"/>
    <property type="match status" value="1"/>
</dbReference>
<dbReference type="CDD" id="cd02079">
    <property type="entry name" value="P-type_ATPase_HM"/>
    <property type="match status" value="1"/>
</dbReference>
<dbReference type="FunFam" id="2.70.150.10:FF:000002">
    <property type="entry name" value="Copper-transporting ATPase 1, putative"/>
    <property type="match status" value="1"/>
</dbReference>
<dbReference type="FunFam" id="3.40.1110.10:FF:000071">
    <property type="entry name" value="Copper-transporting ATPase PAA1 chloroplastic"/>
    <property type="match status" value="1"/>
</dbReference>
<dbReference type="FunFam" id="3.30.70.100:FF:000047">
    <property type="entry name" value="Copper-transporting ATPase PAA1, chloroplastic"/>
    <property type="match status" value="1"/>
</dbReference>
<dbReference type="Gene3D" id="3.30.70.100">
    <property type="match status" value="1"/>
</dbReference>
<dbReference type="Gene3D" id="3.40.1110.10">
    <property type="entry name" value="Calcium-transporting ATPase, cytoplasmic domain N"/>
    <property type="match status" value="1"/>
</dbReference>
<dbReference type="Gene3D" id="2.70.150.10">
    <property type="entry name" value="Calcium-transporting ATPase, cytoplasmic transduction domain A"/>
    <property type="match status" value="1"/>
</dbReference>
<dbReference type="Gene3D" id="3.40.50.1000">
    <property type="entry name" value="HAD superfamily/HAD-like"/>
    <property type="match status" value="1"/>
</dbReference>
<dbReference type="InterPro" id="IPR023299">
    <property type="entry name" value="ATPase_P-typ_cyto_dom_N"/>
</dbReference>
<dbReference type="InterPro" id="IPR018303">
    <property type="entry name" value="ATPase_P-typ_P_site"/>
</dbReference>
<dbReference type="InterPro" id="IPR023298">
    <property type="entry name" value="ATPase_P-typ_TM_dom_sf"/>
</dbReference>
<dbReference type="InterPro" id="IPR008250">
    <property type="entry name" value="ATPase_P-typ_transduc_dom_A_sf"/>
</dbReference>
<dbReference type="InterPro" id="IPR036412">
    <property type="entry name" value="HAD-like_sf"/>
</dbReference>
<dbReference type="InterPro" id="IPR023214">
    <property type="entry name" value="HAD_sf"/>
</dbReference>
<dbReference type="InterPro" id="IPR017969">
    <property type="entry name" value="Heavy-metal-associated_CS"/>
</dbReference>
<dbReference type="InterPro" id="IPR006121">
    <property type="entry name" value="HMA_dom"/>
</dbReference>
<dbReference type="InterPro" id="IPR036163">
    <property type="entry name" value="HMA_dom_sf"/>
</dbReference>
<dbReference type="InterPro" id="IPR027256">
    <property type="entry name" value="P-typ_ATPase_IB"/>
</dbReference>
<dbReference type="InterPro" id="IPR001757">
    <property type="entry name" value="P_typ_ATPase"/>
</dbReference>
<dbReference type="InterPro" id="IPR044492">
    <property type="entry name" value="P_typ_ATPase_HD_dom"/>
</dbReference>
<dbReference type="NCBIfam" id="TIGR01511">
    <property type="entry name" value="ATPase-IB1_Cu"/>
    <property type="match status" value="1"/>
</dbReference>
<dbReference type="NCBIfam" id="TIGR01525">
    <property type="entry name" value="ATPase-IB_hvy"/>
    <property type="match status" value="1"/>
</dbReference>
<dbReference type="NCBIfam" id="TIGR01494">
    <property type="entry name" value="ATPase_P-type"/>
    <property type="match status" value="2"/>
</dbReference>
<dbReference type="PANTHER" id="PTHR43520">
    <property type="entry name" value="ATP7, ISOFORM B"/>
    <property type="match status" value="1"/>
</dbReference>
<dbReference type="PANTHER" id="PTHR43520:SF22">
    <property type="entry name" value="COPPER-TRANSPORTING ATPASE PAA1, CHLOROPLASTIC"/>
    <property type="match status" value="1"/>
</dbReference>
<dbReference type="Pfam" id="PF00122">
    <property type="entry name" value="E1-E2_ATPase"/>
    <property type="match status" value="1"/>
</dbReference>
<dbReference type="Pfam" id="PF00403">
    <property type="entry name" value="HMA"/>
    <property type="match status" value="1"/>
</dbReference>
<dbReference type="Pfam" id="PF00702">
    <property type="entry name" value="Hydrolase"/>
    <property type="match status" value="1"/>
</dbReference>
<dbReference type="PRINTS" id="PR00119">
    <property type="entry name" value="CATATPASE"/>
</dbReference>
<dbReference type="PRINTS" id="PR00943">
    <property type="entry name" value="CUATPASE"/>
</dbReference>
<dbReference type="SFLD" id="SFLDS00003">
    <property type="entry name" value="Haloacid_Dehalogenase"/>
    <property type="match status" value="1"/>
</dbReference>
<dbReference type="SFLD" id="SFLDF00027">
    <property type="entry name" value="p-type_atpase"/>
    <property type="match status" value="1"/>
</dbReference>
<dbReference type="SUPFAM" id="SSF81653">
    <property type="entry name" value="Calcium ATPase, transduction domain A"/>
    <property type="match status" value="1"/>
</dbReference>
<dbReference type="SUPFAM" id="SSF81665">
    <property type="entry name" value="Calcium ATPase, transmembrane domain M"/>
    <property type="match status" value="1"/>
</dbReference>
<dbReference type="SUPFAM" id="SSF56784">
    <property type="entry name" value="HAD-like"/>
    <property type="match status" value="1"/>
</dbReference>
<dbReference type="SUPFAM" id="SSF55008">
    <property type="entry name" value="HMA, heavy metal-associated domain"/>
    <property type="match status" value="1"/>
</dbReference>
<dbReference type="PROSITE" id="PS00154">
    <property type="entry name" value="ATPASE_E1_E2"/>
    <property type="match status" value="1"/>
</dbReference>
<dbReference type="PROSITE" id="PS01047">
    <property type="entry name" value="HMA_1"/>
    <property type="match status" value="1"/>
</dbReference>
<dbReference type="PROSITE" id="PS50846">
    <property type="entry name" value="HMA_2"/>
    <property type="match status" value="1"/>
</dbReference>
<feature type="transit peptide" description="Chloroplast" evidence="2">
    <location>
        <begin position="1"/>
        <end position="103"/>
    </location>
</feature>
<feature type="chain" id="PRO_0000046403" description="Copper-transporting ATPase PAA1, chloroplastic">
    <location>
        <begin position="104"/>
        <end position="949"/>
    </location>
</feature>
<feature type="transmembrane region" description="Helical" evidence="2">
    <location>
        <begin position="253"/>
        <end position="274"/>
    </location>
</feature>
<feature type="transmembrane region" description="Helical" evidence="2">
    <location>
        <begin position="287"/>
        <end position="306"/>
    </location>
</feature>
<feature type="transmembrane region" description="Helical" evidence="2">
    <location>
        <begin position="314"/>
        <end position="334"/>
    </location>
</feature>
<feature type="transmembrane region" description="Helical" evidence="2">
    <location>
        <begin position="349"/>
        <end position="369"/>
    </location>
</feature>
<feature type="transmembrane region" description="Helical" evidence="2">
    <location>
        <begin position="502"/>
        <end position="524"/>
    </location>
</feature>
<feature type="transmembrane region" description="Helical" evidence="2">
    <location>
        <begin position="543"/>
        <end position="560"/>
    </location>
</feature>
<feature type="transmembrane region" description="Helical" evidence="2">
    <location>
        <begin position="863"/>
        <end position="882"/>
    </location>
</feature>
<feature type="transmembrane region" description="Helical" evidence="2">
    <location>
        <begin position="895"/>
        <end position="913"/>
    </location>
</feature>
<feature type="domain" description="HMA" evidence="3">
    <location>
        <begin position="148"/>
        <end position="222"/>
    </location>
</feature>
<feature type="region of interest" description="Disordered" evidence="4">
    <location>
        <begin position="113"/>
        <end position="142"/>
    </location>
</feature>
<feature type="region of interest" description="Disordered" evidence="4">
    <location>
        <begin position="925"/>
        <end position="949"/>
    </location>
</feature>
<feature type="compositionally biased region" description="Gly residues" evidence="4">
    <location>
        <begin position="113"/>
        <end position="126"/>
    </location>
</feature>
<feature type="active site" description="4-aspartylphosphate intermediate" evidence="1">
    <location>
        <position position="598"/>
    </location>
</feature>
<feature type="binding site" evidence="3">
    <location>
        <position position="159"/>
    </location>
    <ligand>
        <name>Cu(+)</name>
        <dbReference type="ChEBI" id="CHEBI:49552"/>
    </ligand>
</feature>
<feature type="binding site" evidence="3">
    <location>
        <position position="162"/>
    </location>
    <ligand>
        <name>Cu(+)</name>
        <dbReference type="ChEBI" id="CHEBI:49552"/>
    </ligand>
</feature>
<feature type="binding site" evidence="2">
    <location>
        <begin position="807"/>
        <end position="814"/>
    </location>
    <ligand>
        <name>ATP</name>
        <dbReference type="ChEBI" id="CHEBI:30616"/>
    </ligand>
</feature>
<feature type="binding site">
    <location>
        <position position="808"/>
    </location>
    <ligand>
        <name>Mg(2+)</name>
        <dbReference type="ChEBI" id="CHEBI:18420"/>
    </ligand>
</feature>
<feature type="binding site">
    <location>
        <position position="812"/>
    </location>
    <ligand>
        <name>Mg(2+)</name>
        <dbReference type="ChEBI" id="CHEBI:18420"/>
    </ligand>
</feature>
<feature type="splice variant" id="VSP_040517" description="In isoform 2." evidence="9">
    <original>DLVTENFFKVFET</original>
    <variation>GEVPEDIAGEFAP</variation>
    <location>
        <begin position="225"/>
        <end position="237"/>
    </location>
</feature>
<feature type="splice variant" id="VSP_040518" description="In isoform 2." evidence="9">
    <location>
        <begin position="238"/>
        <end position="949"/>
    </location>
</feature>
<feature type="sequence variant" description="In strain: cv. Landsberg erecta.">
    <original>T</original>
    <variation>S</variation>
    <location>
        <position position="215"/>
    </location>
</feature>
<feature type="sequence variant" description="In strain: cv. Landsberg erecta.">
    <original>KT</original>
    <variation>QP</variation>
    <location>
        <begin position="238"/>
        <end position="239"/>
    </location>
</feature>
<feature type="sequence variant" description="In strain: cv. Landsberg erecta.">
    <original>L</original>
    <variation>P</variation>
    <location>
        <position position="259"/>
    </location>
</feature>
<feature type="sequence variant" description="In strain: cv. Landsberg erecta.">
    <original>P</original>
    <variation>A</variation>
    <location>
        <position position="384"/>
    </location>
</feature>
<feature type="sequence variant" description="In strain: cv. Landsberg erecta.">
    <original>S</original>
    <variation>T</variation>
    <location>
        <position position="904"/>
    </location>
</feature>
<feature type="strand" evidence="11">
    <location>
        <begin position="609"/>
        <end position="614"/>
    </location>
</feature>
<feature type="helix" evidence="11">
    <location>
        <begin position="629"/>
        <end position="640"/>
    </location>
</feature>
<feature type="helix" evidence="11">
    <location>
        <begin position="646"/>
        <end position="655"/>
    </location>
</feature>
<feature type="strand" evidence="11">
    <location>
        <begin position="671"/>
        <end position="673"/>
    </location>
</feature>
<feature type="turn" evidence="11">
    <location>
        <begin position="674"/>
        <end position="676"/>
    </location>
</feature>
<feature type="strand" evidence="11">
    <location>
        <begin position="677"/>
        <end position="682"/>
    </location>
</feature>
<feature type="strand" evidence="11">
    <location>
        <begin position="685"/>
        <end position="690"/>
    </location>
</feature>
<feature type="helix" evidence="11">
    <location>
        <begin position="692"/>
        <end position="697"/>
    </location>
</feature>
<feature type="helix" evidence="11">
    <location>
        <begin position="704"/>
        <end position="710"/>
    </location>
</feature>
<feature type="strand" evidence="11">
    <location>
        <begin position="718"/>
        <end position="723"/>
    </location>
</feature>
<feature type="strand" evidence="11">
    <location>
        <begin position="726"/>
        <end position="734"/>
    </location>
</feature>
<organism>
    <name type="scientific">Arabidopsis thaliana</name>
    <name type="common">Mouse-ear cress</name>
    <dbReference type="NCBI Taxonomy" id="3702"/>
    <lineage>
        <taxon>Eukaryota</taxon>
        <taxon>Viridiplantae</taxon>
        <taxon>Streptophyta</taxon>
        <taxon>Embryophyta</taxon>
        <taxon>Tracheophyta</taxon>
        <taxon>Spermatophyta</taxon>
        <taxon>Magnoliopsida</taxon>
        <taxon>eudicotyledons</taxon>
        <taxon>Gunneridae</taxon>
        <taxon>Pentapetalae</taxon>
        <taxon>rosids</taxon>
        <taxon>malvids</taxon>
        <taxon>Brassicales</taxon>
        <taxon>Brassicaceae</taxon>
        <taxon>Camelineae</taxon>
        <taxon>Arabidopsis</taxon>
    </lineage>
</organism>
<name>HMA6_ARATH</name>